<sequence length="402" mass="43711">MIIHPKVRGFICTTTHPLGCERNVLEQIAATRARGVRNDGPKKVLVIGASSGYGLASRITAAFGFGADTLGVFFEKPGTASKAGTAGWYNSAAFDKHAKAAGLYSKSINGDAFSDAARAQVIELIKTEMGGQVDLVVYSLASPVRKLPGSGEVKRSALKPIGQTYTATAIDTNKDTIIQASIEPASAQEIEETITVMGGQDWELWIDALEGAGVLADGARSVAFSYIGTEITWPIYWHGALGKAKVDLDRTAQRLNARLAKHGGGANVAVLKSVVTQASAAIPVMPLYISMVYKIMKEKGLHEGTIEQLDRLFRERLYRQDGQPAEVDEQNRLRLDDWELRDDVQDACKALWPQVTTENLFELTDYAGYKHEFLKLFGFGRTDVDYDADVATDVAFDCIELA</sequence>
<proteinExistence type="evidence at protein level"/>
<evidence type="ECO:0000255" key="1">
    <source>
        <dbReference type="HAMAP-Rule" id="MF_01838"/>
    </source>
</evidence>
<evidence type="ECO:0000269" key="2">
    <source>
    </source>
</evidence>
<evidence type="ECO:0000303" key="3">
    <source>
    </source>
</evidence>
<evidence type="ECO:0000305" key="4"/>
<evidence type="ECO:0007829" key="5">
    <source>
        <dbReference type="PDB" id="3S8M"/>
    </source>
</evidence>
<comment type="function">
    <text evidence="2">Involved in the final reduction of the elongation cycle of fatty acid synthesis (FAS II). Catalyzes the reduction of a carbon-carbon double bond in an enoyl moiety that is covalently linked to an acyl carrier protein (ACP). It can also use crotonyl-CoA.</text>
</comment>
<comment type="catalytic activity">
    <reaction evidence="2">
        <text>a 2,3-saturated acyl-[ACP] + NAD(+) = a (2E)-enoyl-[ACP] + NADH + H(+)</text>
        <dbReference type="Rhea" id="RHEA:10240"/>
        <dbReference type="Rhea" id="RHEA-COMP:9925"/>
        <dbReference type="Rhea" id="RHEA-COMP:9926"/>
        <dbReference type="ChEBI" id="CHEBI:15378"/>
        <dbReference type="ChEBI" id="CHEBI:57540"/>
        <dbReference type="ChEBI" id="CHEBI:57945"/>
        <dbReference type="ChEBI" id="CHEBI:78784"/>
        <dbReference type="ChEBI" id="CHEBI:78785"/>
        <dbReference type="EC" id="1.3.1.9"/>
    </reaction>
</comment>
<comment type="catalytic activity">
    <reaction evidence="2">
        <text>a 2,3-saturated acyl-CoA + NAD(+) = a (2E)-enoyl-CoA + NADH + H(+)</text>
        <dbReference type="Rhea" id="RHEA:18177"/>
        <dbReference type="ChEBI" id="CHEBI:15378"/>
        <dbReference type="ChEBI" id="CHEBI:57540"/>
        <dbReference type="ChEBI" id="CHEBI:57945"/>
        <dbReference type="ChEBI" id="CHEBI:58856"/>
        <dbReference type="ChEBI" id="CHEBI:65111"/>
        <dbReference type="EC" id="1.3.1.44"/>
    </reaction>
</comment>
<comment type="biophysicochemical properties">
    <kinetics>
        <KM evidence="2">18.7 uM for NADH</KM>
        <KM evidence="2">293 uM for crotonyl-CoA</KM>
        <text evidence="2">kcat is 1335 sec(-1) for reductase activity.</text>
    </kinetics>
</comment>
<comment type="pathway">
    <text evidence="4">Lipid metabolism; fatty acid biosynthesis.</text>
</comment>
<comment type="subunit">
    <text evidence="2">Monomer.</text>
</comment>
<comment type="similarity">
    <text evidence="1">Belongs to the TER reductase family.</text>
</comment>
<reference key="1">
    <citation type="journal article" date="2005" name="Jpn. Agric. Res. Q.">
        <title>Genome sequence of Xanthomonas oryzae pv. oryzae suggests contribution of large numbers of effector genes and insertion sequences to its race diversity.</title>
        <authorList>
            <person name="Ochiai H."/>
            <person name="Inoue Y."/>
            <person name="Takeya M."/>
            <person name="Sasaki A."/>
            <person name="Kaku H."/>
        </authorList>
    </citation>
    <scope>NUCLEOTIDE SEQUENCE [LARGE SCALE GENOMIC DNA]</scope>
    <source>
        <strain>MAFF 311018</strain>
    </source>
</reference>
<reference key="2">
    <citation type="journal article" date="2011" name="PLoS ONE">
        <title>Determination of the crystal structure and active residues of FabV, the enoyl-ACP reductase from Xanthomonas oryzae.</title>
        <authorList>
            <person name="Li H."/>
            <person name="Zhang X."/>
            <person name="Bi L."/>
            <person name="He J."/>
            <person name="Jiang T."/>
        </authorList>
    </citation>
    <scope>X-RAY CRYSTALLOGRAPHY (1.60 ANGSTROMS)</scope>
    <scope>FUNCTION</scope>
    <scope>CATALYTIC ACTIVITY</scope>
    <scope>BIOPHYSICOCHEMICAL PROPERTIES</scope>
    <scope>MUTAGENESIS OF SER-50; TYR-53; ASP-111; PHE-113; TYR-226; TYR-236; LYS-245; VAL-246 AND THR-276</scope>
    <scope>SUBUNIT</scope>
</reference>
<dbReference type="EC" id="1.3.1.9" evidence="2"/>
<dbReference type="EC" id="1.3.1.44" evidence="2"/>
<dbReference type="EMBL" id="AP008229">
    <property type="protein sequence ID" value="BAE66781.1"/>
    <property type="molecule type" value="Genomic_DNA"/>
</dbReference>
<dbReference type="RefSeq" id="WP_011407173.1">
    <property type="nucleotide sequence ID" value="NC_007705.1"/>
</dbReference>
<dbReference type="PDB" id="3S8M">
    <property type="method" value="X-ray"/>
    <property type="resolution" value="1.60 A"/>
    <property type="chains" value="A=1-402"/>
</dbReference>
<dbReference type="PDBsum" id="3S8M"/>
<dbReference type="SMR" id="Q2P9J6"/>
<dbReference type="KEGG" id="xom:XOO0026"/>
<dbReference type="HOGENOM" id="CLU_057698_1_0_6"/>
<dbReference type="BRENDA" id="1.3.1.9">
    <property type="organism ID" value="6717"/>
</dbReference>
<dbReference type="UniPathway" id="UPA00094"/>
<dbReference type="EvolutionaryTrace" id="Q2P9J6"/>
<dbReference type="GO" id="GO:0004318">
    <property type="term" value="F:enoyl-[acyl-carrier-protein] reductase (NADH) activity"/>
    <property type="evidence" value="ECO:0000314"/>
    <property type="project" value="UniProtKB"/>
</dbReference>
<dbReference type="GO" id="GO:0051287">
    <property type="term" value="F:NAD binding"/>
    <property type="evidence" value="ECO:0007669"/>
    <property type="project" value="UniProtKB-UniRule"/>
</dbReference>
<dbReference type="GO" id="GO:0050343">
    <property type="term" value="F:trans-2-enoyl-CoA reductase (NADH) activity"/>
    <property type="evidence" value="ECO:0000314"/>
    <property type="project" value="UniProtKB"/>
</dbReference>
<dbReference type="GO" id="GO:0006633">
    <property type="term" value="P:fatty acid biosynthetic process"/>
    <property type="evidence" value="ECO:0000314"/>
    <property type="project" value="UniProtKB"/>
</dbReference>
<dbReference type="FunFam" id="3.40.50.720:FF:000221">
    <property type="entry name" value="Enoyl-[acyl-carrier-protein] reductase [NADH]"/>
    <property type="match status" value="1"/>
</dbReference>
<dbReference type="Gene3D" id="3.40.50.720">
    <property type="entry name" value="NAD(P)-binding Rossmann-like Domain"/>
    <property type="match status" value="1"/>
</dbReference>
<dbReference type="HAMAP" id="MF_01838">
    <property type="entry name" value="FabV_reductase"/>
    <property type="match status" value="1"/>
</dbReference>
<dbReference type="InterPro" id="IPR024906">
    <property type="entry name" value="Eno_Rdtase_FAD-bd_dom"/>
</dbReference>
<dbReference type="InterPro" id="IPR024910">
    <property type="entry name" value="Enoyl-CoA_Rdtase_cat_dom"/>
</dbReference>
<dbReference type="InterPro" id="IPR050048">
    <property type="entry name" value="FabV-like_NADH_b"/>
</dbReference>
<dbReference type="InterPro" id="IPR010758">
    <property type="entry name" value="Trans-2-enoyl-CoA_reductase"/>
</dbReference>
<dbReference type="NCBIfam" id="NF043048">
    <property type="entry name" value="EnoyACPredFabV"/>
    <property type="match status" value="1"/>
</dbReference>
<dbReference type="NCBIfam" id="NF010177">
    <property type="entry name" value="PRK13656.1"/>
    <property type="match status" value="1"/>
</dbReference>
<dbReference type="PANTHER" id="PTHR37480">
    <property type="entry name" value="ENOYL-[ACYL-CARRIER-PROTEIN] REDUCTASE [NADH]"/>
    <property type="match status" value="1"/>
</dbReference>
<dbReference type="PANTHER" id="PTHR37480:SF1">
    <property type="entry name" value="ENOYL-[ACYL-CARRIER-PROTEIN] REDUCTASE [NADH]"/>
    <property type="match status" value="1"/>
</dbReference>
<dbReference type="Pfam" id="PF07055">
    <property type="entry name" value="Eno-Rase_FAD_bd"/>
    <property type="match status" value="1"/>
</dbReference>
<dbReference type="Pfam" id="PF12242">
    <property type="entry name" value="Eno-Rase_NADH_b"/>
    <property type="match status" value="1"/>
</dbReference>
<dbReference type="Pfam" id="PF12241">
    <property type="entry name" value="Enoyl_reductase"/>
    <property type="match status" value="1"/>
</dbReference>
<protein>
    <recommendedName>
        <fullName evidence="3">Enoyl-[acyl-carrier-protein] reductase [NADH]</fullName>
        <shortName evidence="3">ENR</shortName>
        <ecNumber evidence="2">1.3.1.9</ecNumber>
    </recommendedName>
    <alternativeName>
        <fullName evidence="3">Trans-2-enoyl-CoA reductase [NADH]</fullName>
        <shortName evidence="3">TER</shortName>
        <ecNumber evidence="2">1.3.1.44</ecNumber>
    </alternativeName>
</protein>
<accession>Q2P9J6</accession>
<name>FABV_XANOM</name>
<feature type="chain" id="PRO_1000070506" description="Enoyl-[acyl-carrier-protein] reductase [NADH]">
    <location>
        <begin position="1"/>
        <end position="402"/>
    </location>
</feature>
<feature type="active site" description="Proton donor" evidence="1">
    <location>
        <position position="236"/>
    </location>
</feature>
<feature type="binding site" evidence="1">
    <location>
        <begin position="48"/>
        <end position="53"/>
    </location>
    <ligand>
        <name>NAD(+)</name>
        <dbReference type="ChEBI" id="CHEBI:57540"/>
    </ligand>
</feature>
<feature type="binding site" evidence="1">
    <location>
        <begin position="74"/>
        <end position="75"/>
    </location>
    <ligand>
        <name>NAD(+)</name>
        <dbReference type="ChEBI" id="CHEBI:57540"/>
    </ligand>
</feature>
<feature type="binding site" evidence="1">
    <location>
        <begin position="111"/>
        <end position="112"/>
    </location>
    <ligand>
        <name>NAD(+)</name>
        <dbReference type="ChEBI" id="CHEBI:57540"/>
    </ligand>
</feature>
<feature type="binding site" evidence="1">
    <location>
        <begin position="140"/>
        <end position="141"/>
    </location>
    <ligand>
        <name>NAD(+)</name>
        <dbReference type="ChEBI" id="CHEBI:57540"/>
    </ligand>
</feature>
<feature type="binding site" evidence="1">
    <location>
        <position position="226"/>
    </location>
    <ligand>
        <name>substrate</name>
    </ligand>
</feature>
<feature type="binding site" evidence="1">
    <location>
        <position position="245"/>
    </location>
    <ligand>
        <name>NAD(+)</name>
        <dbReference type="ChEBI" id="CHEBI:57540"/>
    </ligand>
</feature>
<feature type="binding site" evidence="1">
    <location>
        <begin position="274"/>
        <end position="276"/>
    </location>
    <ligand>
        <name>NAD(+)</name>
        <dbReference type="ChEBI" id="CHEBI:57540"/>
    </ligand>
</feature>
<feature type="site" description="Plays an important role in discriminating NADH against NADPH" evidence="1">
    <location>
        <position position="75"/>
    </location>
</feature>
<feature type="mutagenesis site" description="Same reductase activity as the wild-type. Restores fatty acid synthesis in the E.coli fabI mutant." evidence="2">
    <original>S</original>
    <variation>A</variation>
    <location>
        <position position="50"/>
    </location>
</feature>
<feature type="mutagenesis site" description="Loss of reductase activity. Partially restores fatty acid synthesis in the E.coli fabI mutant." evidence="2">
    <original>Y</original>
    <variation>A</variation>
    <location>
        <position position="53"/>
    </location>
</feature>
<feature type="mutagenesis site" description="50-fold decrease of catalytic efficiency. Restores fatty acid synthesis in the E.coli fabI mutant." evidence="2">
    <original>Y</original>
    <variation>F</variation>
    <location>
        <position position="53"/>
    </location>
</feature>
<feature type="mutagenesis site" description="Loss of reductase activity. It is not able to restore fatty acid synthesis in the E.coli fabI mutant." evidence="2">
    <original>D</original>
    <variation>A</variation>
    <location>
        <position position="111"/>
    </location>
</feature>
<feature type="mutagenesis site" description="Slight decrease of catalytic efficiency. Restores fatty acid synthesis in the E.coli fabI mutant." evidence="2">
    <original>F</original>
    <variation>A</variation>
    <location>
        <position position="113"/>
    </location>
</feature>
<feature type="mutagenesis site" description="50-fold decrease of catalytic efficiency. Restores fatty acid synthesis in the E.coli fabI mutant." evidence="2">
    <original>Y</original>
    <variation>F</variation>
    <location>
        <position position="226"/>
    </location>
</feature>
<feature type="mutagenesis site" description="Loss of reductase activity. It is not able to restore fatty acid synthesis in the E.coli fabI mutant." evidence="2">
    <original>Y</original>
    <variation>A</variation>
    <location>
        <position position="236"/>
    </location>
</feature>
<feature type="mutagenesis site" description="Loss of reductase activity. It is not able to restore fatty acid synthesis in the E.coli fabI mutant." evidence="2">
    <original>Y</original>
    <variation>F</variation>
    <location>
        <position position="236"/>
    </location>
</feature>
<feature type="mutagenesis site" description="Loss of reductase activity. It is not able to restore fatty acid synthesis in the E.coli fabI mutant." evidence="2">
    <original>K</original>
    <variation>A</variation>
    <location>
        <position position="245"/>
    </location>
</feature>
<feature type="mutagenesis site" description="Loss of reductase activity. It is not able to restore fatty acid synthesis in the E.coli fabI mutant." evidence="2">
    <original>K</original>
    <variation>R</variation>
    <location>
        <position position="245"/>
    </location>
</feature>
<feature type="mutagenesis site" description="Same reductase activity as the wild-type. Restores fatty acid synthesis in the E.coli fabI mutant." evidence="2">
    <original>V</original>
    <variation>A</variation>
    <location>
        <position position="246"/>
    </location>
</feature>
<feature type="mutagenesis site" description="Loss of reductase activity. Restores fatty acid synthesis in the E.coli fabI mutant." evidence="2">
    <original>T</original>
    <variation>A</variation>
    <location>
        <position position="276"/>
    </location>
</feature>
<feature type="helix" evidence="5">
    <location>
        <begin position="17"/>
        <end position="33"/>
    </location>
</feature>
<feature type="strand" evidence="5">
    <location>
        <begin position="38"/>
        <end position="40"/>
    </location>
</feature>
<feature type="strand" evidence="5">
    <location>
        <begin position="42"/>
        <end position="48"/>
    </location>
</feature>
<feature type="helix" evidence="5">
    <location>
        <begin position="52"/>
        <end position="65"/>
    </location>
</feature>
<feature type="strand" evidence="5">
    <location>
        <begin position="68"/>
        <end position="73"/>
    </location>
</feature>
<feature type="strand" evidence="5">
    <location>
        <begin position="80"/>
        <end position="82"/>
    </location>
</feature>
<feature type="helix" evidence="5">
    <location>
        <begin position="86"/>
        <end position="100"/>
    </location>
</feature>
<feature type="strand" evidence="5">
    <location>
        <begin position="105"/>
        <end position="110"/>
    </location>
</feature>
<feature type="helix" evidence="5">
    <location>
        <begin position="115"/>
        <end position="128"/>
    </location>
</feature>
<feature type="strand" evidence="5">
    <location>
        <begin position="133"/>
        <end position="138"/>
    </location>
</feature>
<feature type="strand" evidence="5">
    <location>
        <begin position="143"/>
        <end position="146"/>
    </location>
</feature>
<feature type="turn" evidence="5">
    <location>
        <begin position="148"/>
        <end position="150"/>
    </location>
</feature>
<feature type="strand" evidence="5">
    <location>
        <begin position="153"/>
        <end position="155"/>
    </location>
</feature>
<feature type="strand" evidence="5">
    <location>
        <begin position="161"/>
        <end position="163"/>
    </location>
</feature>
<feature type="strand" evidence="5">
    <location>
        <begin position="165"/>
        <end position="170"/>
    </location>
</feature>
<feature type="turn" evidence="5">
    <location>
        <begin position="172"/>
        <end position="174"/>
    </location>
</feature>
<feature type="strand" evidence="5">
    <location>
        <begin position="177"/>
        <end position="182"/>
    </location>
</feature>
<feature type="helix" evidence="5">
    <location>
        <begin position="187"/>
        <end position="197"/>
    </location>
</feature>
<feature type="helix" evidence="5">
    <location>
        <begin position="200"/>
        <end position="211"/>
    </location>
</feature>
<feature type="strand" evidence="5">
    <location>
        <begin position="215"/>
        <end position="226"/>
    </location>
</feature>
<feature type="helix" evidence="5">
    <location>
        <begin position="230"/>
        <end position="232"/>
    </location>
</feature>
<feature type="helix" evidence="5">
    <location>
        <begin position="233"/>
        <end position="236"/>
    </location>
</feature>
<feature type="helix" evidence="5">
    <location>
        <begin position="239"/>
        <end position="260"/>
    </location>
</feature>
<feature type="turn" evidence="5">
    <location>
        <begin position="261"/>
        <end position="263"/>
    </location>
</feature>
<feature type="strand" evidence="5">
    <location>
        <begin position="265"/>
        <end position="271"/>
    </location>
</feature>
<feature type="helix" evidence="5">
    <location>
        <begin position="279"/>
        <end position="281"/>
    </location>
</feature>
<feature type="helix" evidence="5">
    <location>
        <begin position="284"/>
        <end position="298"/>
    </location>
</feature>
<feature type="helix" evidence="5">
    <location>
        <begin position="305"/>
        <end position="315"/>
    </location>
</feature>
<feature type="turn" evidence="5">
    <location>
        <begin position="316"/>
        <end position="318"/>
    </location>
</feature>
<feature type="strand" evidence="5">
    <location>
        <begin position="333"/>
        <end position="335"/>
    </location>
</feature>
<feature type="turn" evidence="5">
    <location>
        <begin position="337"/>
        <end position="340"/>
    </location>
</feature>
<feature type="helix" evidence="5">
    <location>
        <begin position="342"/>
        <end position="351"/>
    </location>
</feature>
<feature type="helix" evidence="5">
    <location>
        <begin position="352"/>
        <end position="354"/>
    </location>
</feature>
<feature type="helix" evidence="5">
    <location>
        <begin position="357"/>
        <end position="359"/>
    </location>
</feature>
<feature type="helix" evidence="5">
    <location>
        <begin position="360"/>
        <end position="363"/>
    </location>
</feature>
<feature type="helix" evidence="5">
    <location>
        <begin position="366"/>
        <end position="376"/>
    </location>
</feature>
<feature type="strand" evidence="5">
    <location>
        <begin position="382"/>
        <end position="384"/>
    </location>
</feature>
<feature type="strand" evidence="5">
    <location>
        <begin position="397"/>
        <end position="400"/>
    </location>
</feature>
<keyword id="KW-0002">3D-structure</keyword>
<keyword id="KW-0275">Fatty acid biosynthesis</keyword>
<keyword id="KW-0276">Fatty acid metabolism</keyword>
<keyword id="KW-0444">Lipid biosynthesis</keyword>
<keyword id="KW-0443">Lipid metabolism</keyword>
<keyword id="KW-0520">NAD</keyword>
<keyword id="KW-0560">Oxidoreductase</keyword>
<gene>
    <name evidence="3" type="primary">fabV</name>
    <name type="ordered locus">XOO0026</name>
</gene>
<organism>
    <name type="scientific">Xanthomonas oryzae pv. oryzae (strain MAFF 311018)</name>
    <dbReference type="NCBI Taxonomy" id="342109"/>
    <lineage>
        <taxon>Bacteria</taxon>
        <taxon>Pseudomonadati</taxon>
        <taxon>Pseudomonadota</taxon>
        <taxon>Gammaproteobacteria</taxon>
        <taxon>Lysobacterales</taxon>
        <taxon>Lysobacteraceae</taxon>
        <taxon>Xanthomonas</taxon>
    </lineage>
</organism>